<gene>
    <name evidence="1" type="primary">fusA</name>
    <name type="ordered locus">CF0815</name>
</gene>
<proteinExistence type="inferred from homology"/>
<accession>Q253F1</accession>
<dbReference type="EMBL" id="AP006861">
    <property type="protein sequence ID" value="BAE81587.1"/>
    <property type="molecule type" value="Genomic_DNA"/>
</dbReference>
<dbReference type="RefSeq" id="WP_011458363.1">
    <property type="nucleotide sequence ID" value="NC_007899.1"/>
</dbReference>
<dbReference type="SMR" id="Q253F1"/>
<dbReference type="STRING" id="264202.CF0815"/>
<dbReference type="KEGG" id="cfe:CF0815"/>
<dbReference type="eggNOG" id="COG0480">
    <property type="taxonomic scope" value="Bacteria"/>
</dbReference>
<dbReference type="HOGENOM" id="CLU_002794_4_1_0"/>
<dbReference type="OrthoDB" id="9801591at2"/>
<dbReference type="Proteomes" id="UP000001260">
    <property type="component" value="Chromosome"/>
</dbReference>
<dbReference type="GO" id="GO:0005737">
    <property type="term" value="C:cytoplasm"/>
    <property type="evidence" value="ECO:0007669"/>
    <property type="project" value="UniProtKB-SubCell"/>
</dbReference>
<dbReference type="GO" id="GO:0005525">
    <property type="term" value="F:GTP binding"/>
    <property type="evidence" value="ECO:0007669"/>
    <property type="project" value="UniProtKB-UniRule"/>
</dbReference>
<dbReference type="GO" id="GO:0003924">
    <property type="term" value="F:GTPase activity"/>
    <property type="evidence" value="ECO:0007669"/>
    <property type="project" value="InterPro"/>
</dbReference>
<dbReference type="GO" id="GO:0003746">
    <property type="term" value="F:translation elongation factor activity"/>
    <property type="evidence" value="ECO:0007669"/>
    <property type="project" value="UniProtKB-UniRule"/>
</dbReference>
<dbReference type="GO" id="GO:0032790">
    <property type="term" value="P:ribosome disassembly"/>
    <property type="evidence" value="ECO:0007669"/>
    <property type="project" value="TreeGrafter"/>
</dbReference>
<dbReference type="CDD" id="cd01886">
    <property type="entry name" value="EF-G"/>
    <property type="match status" value="1"/>
</dbReference>
<dbReference type="CDD" id="cd16262">
    <property type="entry name" value="EFG_III"/>
    <property type="match status" value="1"/>
</dbReference>
<dbReference type="CDD" id="cd01434">
    <property type="entry name" value="EFG_mtEFG1_IV"/>
    <property type="match status" value="1"/>
</dbReference>
<dbReference type="CDD" id="cd03713">
    <property type="entry name" value="EFG_mtEFG_C"/>
    <property type="match status" value="1"/>
</dbReference>
<dbReference type="CDD" id="cd04088">
    <property type="entry name" value="EFG_mtEFG_II"/>
    <property type="match status" value="1"/>
</dbReference>
<dbReference type="FunFam" id="2.40.30.10:FF:000006">
    <property type="entry name" value="Elongation factor G"/>
    <property type="match status" value="1"/>
</dbReference>
<dbReference type="FunFam" id="3.30.230.10:FF:000003">
    <property type="entry name" value="Elongation factor G"/>
    <property type="match status" value="1"/>
</dbReference>
<dbReference type="FunFam" id="3.30.70.240:FF:000001">
    <property type="entry name" value="Elongation factor G"/>
    <property type="match status" value="1"/>
</dbReference>
<dbReference type="FunFam" id="3.30.70.870:FF:000001">
    <property type="entry name" value="Elongation factor G"/>
    <property type="match status" value="1"/>
</dbReference>
<dbReference type="FunFam" id="3.40.50.300:FF:000029">
    <property type="entry name" value="Elongation factor G"/>
    <property type="match status" value="1"/>
</dbReference>
<dbReference type="Gene3D" id="3.30.230.10">
    <property type="match status" value="1"/>
</dbReference>
<dbReference type="Gene3D" id="3.30.70.240">
    <property type="match status" value="1"/>
</dbReference>
<dbReference type="Gene3D" id="3.30.70.870">
    <property type="entry name" value="Elongation Factor G (Translational Gtpase), domain 3"/>
    <property type="match status" value="1"/>
</dbReference>
<dbReference type="Gene3D" id="3.40.50.300">
    <property type="entry name" value="P-loop containing nucleotide triphosphate hydrolases"/>
    <property type="match status" value="1"/>
</dbReference>
<dbReference type="Gene3D" id="2.40.30.10">
    <property type="entry name" value="Translation factors"/>
    <property type="match status" value="1"/>
</dbReference>
<dbReference type="HAMAP" id="MF_00054_B">
    <property type="entry name" value="EF_G_EF_2_B"/>
    <property type="match status" value="1"/>
</dbReference>
<dbReference type="InterPro" id="IPR041095">
    <property type="entry name" value="EFG_II"/>
</dbReference>
<dbReference type="InterPro" id="IPR009022">
    <property type="entry name" value="EFG_III"/>
</dbReference>
<dbReference type="InterPro" id="IPR035647">
    <property type="entry name" value="EFG_III/V"/>
</dbReference>
<dbReference type="InterPro" id="IPR047872">
    <property type="entry name" value="EFG_IV"/>
</dbReference>
<dbReference type="InterPro" id="IPR035649">
    <property type="entry name" value="EFG_V"/>
</dbReference>
<dbReference type="InterPro" id="IPR000640">
    <property type="entry name" value="EFG_V-like"/>
</dbReference>
<dbReference type="InterPro" id="IPR004161">
    <property type="entry name" value="EFTu-like_2"/>
</dbReference>
<dbReference type="InterPro" id="IPR031157">
    <property type="entry name" value="G_TR_CS"/>
</dbReference>
<dbReference type="InterPro" id="IPR027417">
    <property type="entry name" value="P-loop_NTPase"/>
</dbReference>
<dbReference type="InterPro" id="IPR020568">
    <property type="entry name" value="Ribosomal_Su5_D2-typ_SF"/>
</dbReference>
<dbReference type="InterPro" id="IPR014721">
    <property type="entry name" value="Ribsml_uS5_D2-typ_fold_subgr"/>
</dbReference>
<dbReference type="InterPro" id="IPR005225">
    <property type="entry name" value="Small_GTP-bd"/>
</dbReference>
<dbReference type="InterPro" id="IPR000795">
    <property type="entry name" value="T_Tr_GTP-bd_dom"/>
</dbReference>
<dbReference type="InterPro" id="IPR009000">
    <property type="entry name" value="Transl_B-barrel_sf"/>
</dbReference>
<dbReference type="InterPro" id="IPR004540">
    <property type="entry name" value="Transl_elong_EFG/EF2"/>
</dbReference>
<dbReference type="InterPro" id="IPR005517">
    <property type="entry name" value="Transl_elong_EFG/EF2_IV"/>
</dbReference>
<dbReference type="NCBIfam" id="TIGR00484">
    <property type="entry name" value="EF-G"/>
    <property type="match status" value="1"/>
</dbReference>
<dbReference type="NCBIfam" id="NF009381">
    <property type="entry name" value="PRK12740.1-5"/>
    <property type="match status" value="1"/>
</dbReference>
<dbReference type="NCBIfam" id="TIGR00231">
    <property type="entry name" value="small_GTP"/>
    <property type="match status" value="1"/>
</dbReference>
<dbReference type="PANTHER" id="PTHR43261:SF1">
    <property type="entry name" value="RIBOSOME-RELEASING FACTOR 2, MITOCHONDRIAL"/>
    <property type="match status" value="1"/>
</dbReference>
<dbReference type="PANTHER" id="PTHR43261">
    <property type="entry name" value="TRANSLATION ELONGATION FACTOR G-RELATED"/>
    <property type="match status" value="1"/>
</dbReference>
<dbReference type="Pfam" id="PF00679">
    <property type="entry name" value="EFG_C"/>
    <property type="match status" value="1"/>
</dbReference>
<dbReference type="Pfam" id="PF14492">
    <property type="entry name" value="EFG_III"/>
    <property type="match status" value="1"/>
</dbReference>
<dbReference type="Pfam" id="PF03764">
    <property type="entry name" value="EFG_IV"/>
    <property type="match status" value="1"/>
</dbReference>
<dbReference type="Pfam" id="PF00009">
    <property type="entry name" value="GTP_EFTU"/>
    <property type="match status" value="1"/>
</dbReference>
<dbReference type="Pfam" id="PF03144">
    <property type="entry name" value="GTP_EFTU_D2"/>
    <property type="match status" value="1"/>
</dbReference>
<dbReference type="PRINTS" id="PR00315">
    <property type="entry name" value="ELONGATNFCT"/>
</dbReference>
<dbReference type="SMART" id="SM00838">
    <property type="entry name" value="EFG_C"/>
    <property type="match status" value="1"/>
</dbReference>
<dbReference type="SMART" id="SM00889">
    <property type="entry name" value="EFG_IV"/>
    <property type="match status" value="1"/>
</dbReference>
<dbReference type="SUPFAM" id="SSF54980">
    <property type="entry name" value="EF-G C-terminal domain-like"/>
    <property type="match status" value="2"/>
</dbReference>
<dbReference type="SUPFAM" id="SSF52540">
    <property type="entry name" value="P-loop containing nucleoside triphosphate hydrolases"/>
    <property type="match status" value="1"/>
</dbReference>
<dbReference type="SUPFAM" id="SSF54211">
    <property type="entry name" value="Ribosomal protein S5 domain 2-like"/>
    <property type="match status" value="1"/>
</dbReference>
<dbReference type="SUPFAM" id="SSF50447">
    <property type="entry name" value="Translation proteins"/>
    <property type="match status" value="1"/>
</dbReference>
<dbReference type="PROSITE" id="PS00301">
    <property type="entry name" value="G_TR_1"/>
    <property type="match status" value="1"/>
</dbReference>
<dbReference type="PROSITE" id="PS51722">
    <property type="entry name" value="G_TR_2"/>
    <property type="match status" value="1"/>
</dbReference>
<comment type="function">
    <text evidence="1">Catalyzes the GTP-dependent ribosomal translocation step during translation elongation. During this step, the ribosome changes from the pre-translocational (PRE) to the post-translocational (POST) state as the newly formed A-site-bound peptidyl-tRNA and P-site-bound deacylated tRNA move to the P and E sites, respectively. Catalyzes the coordinated movement of the two tRNA molecules, the mRNA and conformational changes in the ribosome.</text>
</comment>
<comment type="subcellular location">
    <subcellularLocation>
        <location evidence="1">Cytoplasm</location>
    </subcellularLocation>
</comment>
<comment type="similarity">
    <text evidence="1">Belongs to the TRAFAC class translation factor GTPase superfamily. Classic translation factor GTPase family. EF-G/EF-2 subfamily.</text>
</comment>
<protein>
    <recommendedName>
        <fullName evidence="1">Elongation factor G</fullName>
        <shortName evidence="1">EF-G</shortName>
    </recommendedName>
</protein>
<reference key="1">
    <citation type="journal article" date="2006" name="DNA Res.">
        <title>Genome sequence of the cat pathogen, Chlamydophila felis.</title>
        <authorList>
            <person name="Azuma Y."/>
            <person name="Hirakawa H."/>
            <person name="Yamashita A."/>
            <person name="Cai Y."/>
            <person name="Rahman M.A."/>
            <person name="Suzuki H."/>
            <person name="Mitaku S."/>
            <person name="Toh H."/>
            <person name="Goto S."/>
            <person name="Murakami T."/>
            <person name="Sugi K."/>
            <person name="Hayashi H."/>
            <person name="Fukushi H."/>
            <person name="Hattori M."/>
            <person name="Kuhara S."/>
            <person name="Shirai M."/>
        </authorList>
    </citation>
    <scope>NUCLEOTIDE SEQUENCE [LARGE SCALE GENOMIC DNA]</scope>
    <source>
        <strain>Fe/C-56</strain>
    </source>
</reference>
<feature type="chain" id="PRO_0000263439" description="Elongation factor G">
    <location>
        <begin position="1"/>
        <end position="694"/>
    </location>
</feature>
<feature type="domain" description="tr-type G">
    <location>
        <begin position="9"/>
        <end position="288"/>
    </location>
</feature>
<feature type="binding site" evidence="1">
    <location>
        <begin position="18"/>
        <end position="25"/>
    </location>
    <ligand>
        <name>GTP</name>
        <dbReference type="ChEBI" id="CHEBI:37565"/>
    </ligand>
</feature>
<feature type="binding site" evidence="1">
    <location>
        <begin position="82"/>
        <end position="86"/>
    </location>
    <ligand>
        <name>GTP</name>
        <dbReference type="ChEBI" id="CHEBI:37565"/>
    </ligand>
</feature>
<feature type="binding site" evidence="1">
    <location>
        <begin position="136"/>
        <end position="139"/>
    </location>
    <ligand>
        <name>GTP</name>
        <dbReference type="ChEBI" id="CHEBI:37565"/>
    </ligand>
</feature>
<sequence>MSDQEFDLSKIRNIGIMAHIDAGKTTTTERILYYAGRTHKIGEVHEGGATMDWMEQEQERGITITSAATTVFWLDCKINIIDTPGHVDFTIEVERSLRVLDGAVAVFDAVSGVEPQSETVWRQANKYGVPRIAFVNKMDRMGADYFAAVESMKEKLGANAVAVHCPIGSESQFVGMVDLISQKALYFLDETLGAKWEEREIPEELKEKCAELRYALLEELATIDESNEAFMEKVLEDPDSITEDEIHAVMRKGVIENKINPVLCGTAFKNKGVQQLLNVIVKWLPSPKDRGTIHGISLKNNAEISLEPRKDGPLAALAFKIMTDPYVGRITFIRIYSGTLKKGSAILNSTKDKKERISRLLEMHANERTDRDEFTVGDIGACVGLKFSVTGDTLCDENQEIVLERIEIPEPVIDMAIEPKSKGDREKLAQALNALSEEDPTFRVTSNEETGQTIISGMGELHLDILRDRMIREFKVEANVGKPQVSYKETITKNGASETKYVKQSGGRGQYAHVCLEIEPNEPGKGNEVVSKIVGGVIPKEYIPAVIKGVEEGLNSGVLAGYGLVDVKVNIVFGSYHEVDSSEMAFKICGSMAVKEACRKAAPIILEPIMKIAVITPEDHLGDVIGDLNRRRGKILGQESSRGMAQVNAEVPLSEMFGYTTSLRSLTSGRATSTMEPAFFAKVPQKIQEEIVKK</sequence>
<keyword id="KW-0963">Cytoplasm</keyword>
<keyword id="KW-0251">Elongation factor</keyword>
<keyword id="KW-0342">GTP-binding</keyword>
<keyword id="KW-0547">Nucleotide-binding</keyword>
<keyword id="KW-0648">Protein biosynthesis</keyword>
<organism>
    <name type="scientific">Chlamydia felis (strain Fe/C-56)</name>
    <name type="common">Chlamydophila felis</name>
    <dbReference type="NCBI Taxonomy" id="264202"/>
    <lineage>
        <taxon>Bacteria</taxon>
        <taxon>Pseudomonadati</taxon>
        <taxon>Chlamydiota</taxon>
        <taxon>Chlamydiia</taxon>
        <taxon>Chlamydiales</taxon>
        <taxon>Chlamydiaceae</taxon>
        <taxon>Chlamydia/Chlamydophila group</taxon>
        <taxon>Chlamydia</taxon>
    </lineage>
</organism>
<name>EFG_CHLFF</name>
<evidence type="ECO:0000255" key="1">
    <source>
        <dbReference type="HAMAP-Rule" id="MF_00054"/>
    </source>
</evidence>